<reference evidence="11" key="1">
    <citation type="journal article" date="2011" name="Allergy">
        <title>Molecular cloning and characterization of Fag t 2: a 16-kDa major allergen from Tartary buckwheat seeds.</title>
        <authorList>
            <person name="Chen P."/>
            <person name="Guo Y.F."/>
            <person name="Yan Q."/>
            <person name="Li Y.H."/>
        </authorList>
    </citation>
    <scope>NUCLEOTIDE SEQUENCE [MRNA]</scope>
    <scope>PROTEIN SEQUENCE OF 23-34</scope>
    <scope>TISSUE SPECIFICITY</scope>
    <scope>DEVELOPMENTAL STAGE</scope>
    <scope>ALLERGEN</scope>
    <source>
        <tissue evidence="5">Seed</tissue>
    </source>
</reference>
<reference key="2">
    <citation type="journal article" date="2018" name="Mol. Immunol.">
        <title>Characterization of 16-kDa major allergen with alpha-amylase inhibitor domain in tartary buckwheat seeds.</title>
        <authorList>
            <person name="Zheng B."/>
            <person name="Zhang H."/>
            <person name="Wang L."/>
            <person name="Guo Y."/>
            <person name="Chen P."/>
        </authorList>
    </citation>
    <scope>PROTEIN SEQUENCE OF 23-34</scope>
    <scope>TISSUE SPECIFICITY</scope>
    <scope>DEVELOPMENTAL STAGE</scope>
    <scope>IDENTIFICATION BY MASS SPECTROMETRY</scope>
    <scope>ALLERGEN</scope>
    <scope>3D-STRUCTURE MODELING</scope>
    <scope>PHYLOGENETIC ANALYSIS</scope>
</reference>
<reference key="3">
    <citation type="journal article" date="2021" name="Food Chem.">
        <title>Core epitope analysis of 16 kDa allergen from tartary buckwheat.</title>
        <authorList>
            <person name="Zheng B."/>
            <person name="Zhang H."/>
            <person name="Shen W."/>
            <person name="Wang L."/>
            <person name="Chen P."/>
        </authorList>
    </citation>
    <scope>ALLERGEN</scope>
    <scope>REGIONS</scope>
    <scope>MUTAGENESIS OF CYS-38; CYS-52; ARG-71; 87-CYS-CYS-88; CYS-100 AND LYS-132</scope>
    <scope>3D-STRUCTURE MODELING</scope>
    <scope>CIRCULAR DICHROISM ANALYSIS</scope>
</reference>
<accession>E9NX73</accession>
<keyword id="KW-0020">Allergen</keyword>
<keyword id="KW-0903">Direct protein sequencing</keyword>
<keyword id="KW-1015">Disulfide bond</keyword>
<keyword id="KW-0389">IgE-binding protein</keyword>
<keyword id="KW-0708">Seed storage protein</keyword>
<keyword id="KW-0732">Signal</keyword>
<keyword id="KW-0758">Storage protein</keyword>
<organism evidence="11">
    <name type="scientific">Fagopyrum tataricum</name>
    <name type="common">Tartarian buckwheat</name>
    <name type="synonym">Polygonum tataricum</name>
    <dbReference type="NCBI Taxonomy" id="62330"/>
    <lineage>
        <taxon>Eukaryota</taxon>
        <taxon>Viridiplantae</taxon>
        <taxon>Streptophyta</taxon>
        <taxon>Embryophyta</taxon>
        <taxon>Tracheophyta</taxon>
        <taxon>Spermatophyta</taxon>
        <taxon>Magnoliopsida</taxon>
        <taxon>eudicotyledons</taxon>
        <taxon>Gunneridae</taxon>
        <taxon>Pentapetalae</taxon>
        <taxon>Caryophyllales</taxon>
        <taxon>Polygonaceae</taxon>
        <taxon>Polygonoideae</taxon>
        <taxon>Fagopyreae</taxon>
        <taxon>Fagopyrum</taxon>
    </lineage>
</organism>
<dbReference type="EMBL" id="HQ829975">
    <property type="protein sequence ID" value="ADW27428.1"/>
    <property type="molecule type" value="mRNA"/>
</dbReference>
<dbReference type="SMR" id="E9NX73"/>
<dbReference type="Allergome" id="9488">
    <property type="allergen name" value="Fag t 2"/>
</dbReference>
<dbReference type="Allergome" id="9511">
    <property type="allergen name" value="Fag t 2.0101"/>
</dbReference>
<dbReference type="GO" id="GO:0019863">
    <property type="term" value="F:IgE binding"/>
    <property type="evidence" value="ECO:0007669"/>
    <property type="project" value="UniProtKB-KW"/>
</dbReference>
<dbReference type="GO" id="GO:0045735">
    <property type="term" value="F:nutrient reservoir activity"/>
    <property type="evidence" value="ECO:0007669"/>
    <property type="project" value="UniProtKB-KW"/>
</dbReference>
<dbReference type="Gene3D" id="1.10.110.10">
    <property type="entry name" value="Plant lipid-transfer and hydrophobic proteins"/>
    <property type="match status" value="1"/>
</dbReference>
<dbReference type="InterPro" id="IPR036312">
    <property type="entry name" value="Bifun_inhib/LTP/seed_sf"/>
</dbReference>
<dbReference type="InterPro" id="IPR016140">
    <property type="entry name" value="Bifunc_inhib/LTP/seed_store"/>
</dbReference>
<dbReference type="InterPro" id="IPR000617">
    <property type="entry name" value="Napin/2SS/CON"/>
</dbReference>
<dbReference type="PANTHER" id="PTHR35496">
    <property type="entry name" value="2S SEED STORAGE PROTEIN 1-RELATED"/>
    <property type="match status" value="1"/>
</dbReference>
<dbReference type="PANTHER" id="PTHR35496:SF4">
    <property type="entry name" value="2S SULFUR-RICH SEED STORAGE PROTEIN 2-LIKE"/>
    <property type="match status" value="1"/>
</dbReference>
<dbReference type="Pfam" id="PF00234">
    <property type="entry name" value="Tryp_alpha_amyl"/>
    <property type="match status" value="1"/>
</dbReference>
<dbReference type="SUPFAM" id="SSF47699">
    <property type="entry name" value="Bifunctional inhibitor/lipid-transfer protein/seed storage 2S albumin"/>
    <property type="match status" value="1"/>
</dbReference>
<proteinExistence type="evidence at protein level"/>
<feature type="signal peptide" evidence="2 3">
    <location>
        <begin position="1"/>
        <end position="22"/>
    </location>
</feature>
<feature type="chain" id="PRO_5003243888" description="2S seed storage albumin protein" evidence="9 10">
    <location>
        <begin position="23"/>
        <end position="149"/>
    </location>
</feature>
<feature type="region of interest" description="No IgE-binding" evidence="4">
    <location>
        <begin position="41"/>
        <end position="53"/>
    </location>
</feature>
<feature type="region of interest" description="No IgE-binding" evidence="4">
    <location>
        <begin position="68"/>
        <end position="81"/>
    </location>
</feature>
<feature type="region of interest" description="No IgE-binding" evidence="4">
    <location>
        <begin position="84"/>
        <end position="95"/>
    </location>
</feature>
<feature type="region of interest" description="No IgE-binding" evidence="4">
    <location>
        <begin position="97"/>
        <end position="105"/>
    </location>
</feature>
<feature type="region of interest" description="IgE-binding" evidence="4">
    <location>
        <begin position="108"/>
        <end position="117"/>
    </location>
</feature>
<feature type="region of interest" description="No IgE-binding" evidence="4">
    <location>
        <begin position="121"/>
        <end position="131"/>
    </location>
</feature>
<feature type="region of interest" description="IgE-binding" evidence="4">
    <location>
        <begin position="132"/>
        <end position="141"/>
    </location>
</feature>
<feature type="disulfide bond" evidence="1">
    <location>
        <begin position="38"/>
        <end position="98"/>
    </location>
</feature>
<feature type="disulfide bond" evidence="1">
    <location>
        <begin position="52"/>
        <end position="87"/>
    </location>
</feature>
<feature type="disulfide bond" evidence="1">
    <location>
        <begin position="88"/>
        <end position="133"/>
    </location>
</feature>
<feature type="disulfide bond" evidence="1">
    <location>
        <begin position="100"/>
        <end position="140"/>
    </location>
</feature>
<feature type="mutagenesis site" description="No effect in a competitive IgE inhibition ELISA." evidence="4">
    <original>C</original>
    <variation>G</variation>
    <location>
        <position position="38"/>
    </location>
</feature>
<feature type="mutagenesis site" description="21% inhibitory efficiency in a competitive IgE inhibition ELISA." evidence="4">
    <original>C</original>
    <variation>G</variation>
    <location>
        <position position="52"/>
    </location>
</feature>
<feature type="mutagenesis site" description="No effect in a competitive IgE inhibition ELISA." evidence="4">
    <original>R</original>
    <variation>N</variation>
    <location>
        <position position="71"/>
    </location>
</feature>
<feature type="mutagenesis site" description="33% inhibitory efficiency in a competitive IgE inhibition ELISA." evidence="4">
    <original>CC</original>
    <variation>GG</variation>
    <location>
        <begin position="87"/>
        <end position="88"/>
    </location>
</feature>
<feature type="mutagenesis site" description="43% inhibitory efficiency in a competitive IgE inhibition ELISA." evidence="4">
    <original>C</original>
    <variation>Y</variation>
    <location>
        <position position="100"/>
    </location>
</feature>
<feature type="mutagenesis site" description="55% inhibitory efficiency in a competitive IgE inhibition ELISA." evidence="4">
    <original>K</original>
    <variation>N</variation>
    <location>
        <position position="132"/>
    </location>
</feature>
<comment type="function">
    <text evidence="8">Seed storage protein.</text>
</comment>
<comment type="tissue specificity">
    <text evidence="2 3">Expressed in seeds (at protein level) (PubMed:21645012, PubMed:29306152). Expressed in seeds (PubMed:29306152).</text>
</comment>
<comment type="developmental stage">
    <text evidence="2 3">Expressed in developing seeds. Expressed in embryo, but not in endosperm (at protein level).</text>
</comment>
<comment type="allergen">
    <text evidence="2 3 4">Causes an allergic reaction in human. Binds to IgE of patients allergic to buckwheat (PubMed:21645012, PubMed:29306152, PubMed:33412487). Binds to IgE in 74% of the 23 tartarian buckwheat-allergic patients tested (PubMed:29306152). IgE-binding of the natural and recombinant protein is unaffected by heat treatment or pepsin digestion (PubMed:21645012, PubMed:29306152).</text>
</comment>
<comment type="similarity">
    <text evidence="5 6">Belongs to the 2S seed storage albumins family.</text>
</comment>
<name>2SS_FAGTA</name>
<sequence length="149" mass="17280">MKLFIILATATLLIAATQAKYLRDEGFDLGETQMSSKCTRQVKMMEPELVKCNRYIAMDIMDDKYEEALSRIQGEGCESEEKFLRGCCVAMKEMEDECVCEWMKMMVENQKGRIGETLMRKGIRDLKELPNKCGISEMECHSRGNWYYV</sequence>
<protein>
    <recommendedName>
        <fullName evidence="8">2S seed storage albumin protein</fullName>
    </recommendedName>
    <alternativeName>
        <fullName evidence="7">16 kDa allergen Fag t 2</fullName>
    </alternativeName>
    <alternativeName>
        <fullName evidence="5 6 11">16 kDa major allergen</fullName>
    </alternativeName>
    <alternativeName>
        <fullName evidence="5 6">2S albumin</fullName>
    </alternativeName>
    <alternativeName>
        <fullName evidence="8">2S seed storage protein</fullName>
    </alternativeName>
    <alternativeName>
        <fullName evidence="5">Major allergen Fag t 2</fullName>
    </alternativeName>
    <allergenName evidence="8">Fag t 2.0101</allergenName>
</protein>
<evidence type="ECO:0000250" key="1">
    <source>
        <dbReference type="UniProtKB" id="Q647G9"/>
    </source>
</evidence>
<evidence type="ECO:0000269" key="2">
    <source>
    </source>
</evidence>
<evidence type="ECO:0000269" key="3">
    <source>
    </source>
</evidence>
<evidence type="ECO:0000269" key="4">
    <source>
    </source>
</evidence>
<evidence type="ECO:0000303" key="5">
    <source>
    </source>
</evidence>
<evidence type="ECO:0000303" key="6">
    <source>
    </source>
</evidence>
<evidence type="ECO:0000303" key="7">
    <source>
    </source>
</evidence>
<evidence type="ECO:0000305" key="8"/>
<evidence type="ECO:0000305" key="9">
    <source>
    </source>
</evidence>
<evidence type="ECO:0000305" key="10">
    <source>
    </source>
</evidence>
<evidence type="ECO:0000312" key="11">
    <source>
        <dbReference type="EMBL" id="ADW27428.1"/>
    </source>
</evidence>